<gene>
    <name type="primary">Bloc1s6</name>
    <name type="synonym">Pldn</name>
</gene>
<dbReference type="EMBL" id="CH473949">
    <property type="protein sequence ID" value="EDL80048.1"/>
    <property type="molecule type" value="Genomic_DNA"/>
</dbReference>
<dbReference type="EMBL" id="BC097469">
    <property type="protein sequence ID" value="AAH97469.1"/>
    <property type="molecule type" value="mRNA"/>
</dbReference>
<dbReference type="RefSeq" id="NP_001020885.1">
    <property type="nucleotide sequence ID" value="NM_001025714.1"/>
</dbReference>
<dbReference type="SMR" id="Q4V8A6"/>
<dbReference type="FunCoup" id="Q4V8A6">
    <property type="interactions" value="2686"/>
</dbReference>
<dbReference type="STRING" id="10116.ENSRNOP00000052934"/>
<dbReference type="GlyGen" id="Q4V8A6">
    <property type="glycosylation" value="1 site"/>
</dbReference>
<dbReference type="PhosphoSitePlus" id="Q4V8A6"/>
<dbReference type="jPOST" id="Q4V8A6"/>
<dbReference type="PaxDb" id="10116-ENSRNOP00000052934"/>
<dbReference type="GeneID" id="317630"/>
<dbReference type="KEGG" id="rno:317630"/>
<dbReference type="UCSC" id="RGD:1310208">
    <property type="organism name" value="rat"/>
</dbReference>
<dbReference type="AGR" id="RGD:1310208"/>
<dbReference type="CTD" id="26258"/>
<dbReference type="RGD" id="1310208">
    <property type="gene designation" value="Bloc1s6"/>
</dbReference>
<dbReference type="eggNOG" id="ENOG502RZNC">
    <property type="taxonomic scope" value="Eukaryota"/>
</dbReference>
<dbReference type="HOGENOM" id="CLU_115118_1_0_1"/>
<dbReference type="InParanoid" id="Q4V8A6"/>
<dbReference type="OrthoDB" id="19659at2759"/>
<dbReference type="PhylomeDB" id="Q4V8A6"/>
<dbReference type="TreeFam" id="TF325188"/>
<dbReference type="Reactome" id="R-RNO-432722">
    <property type="pathway name" value="Golgi Associated Vesicle Biogenesis"/>
</dbReference>
<dbReference type="PRO" id="PR:Q4V8A6"/>
<dbReference type="Proteomes" id="UP000002494">
    <property type="component" value="Chromosome 3"/>
</dbReference>
<dbReference type="Proteomes" id="UP000234681">
    <property type="component" value="Chromosome 3"/>
</dbReference>
<dbReference type="Bgee" id="ENSRNOG00000037160">
    <property type="expression patterns" value="Expressed in quadriceps femoris and 19 other cell types or tissues"/>
</dbReference>
<dbReference type="GO" id="GO:1904115">
    <property type="term" value="C:axon cytoplasm"/>
    <property type="evidence" value="ECO:0007669"/>
    <property type="project" value="GOC"/>
</dbReference>
<dbReference type="GO" id="GO:0031083">
    <property type="term" value="C:BLOC-1 complex"/>
    <property type="evidence" value="ECO:0000250"/>
    <property type="project" value="UniProtKB"/>
</dbReference>
<dbReference type="GO" id="GO:0044291">
    <property type="term" value="C:cell-cell contact zone"/>
    <property type="evidence" value="ECO:0000266"/>
    <property type="project" value="RGD"/>
</dbReference>
<dbReference type="GO" id="GO:0070938">
    <property type="term" value="C:contractile ring"/>
    <property type="evidence" value="ECO:0000266"/>
    <property type="project" value="RGD"/>
</dbReference>
<dbReference type="GO" id="GO:0005737">
    <property type="term" value="C:cytoplasm"/>
    <property type="evidence" value="ECO:0000250"/>
    <property type="project" value="UniProtKB"/>
</dbReference>
<dbReference type="GO" id="GO:0005768">
    <property type="term" value="C:endosome"/>
    <property type="evidence" value="ECO:0000266"/>
    <property type="project" value="RGD"/>
</dbReference>
<dbReference type="GO" id="GO:0031941">
    <property type="term" value="C:filamentous actin"/>
    <property type="evidence" value="ECO:0000266"/>
    <property type="project" value="RGD"/>
</dbReference>
<dbReference type="GO" id="GO:0005925">
    <property type="term" value="C:focal adhesion"/>
    <property type="evidence" value="ECO:0000266"/>
    <property type="project" value="RGD"/>
</dbReference>
<dbReference type="GO" id="GO:0043227">
    <property type="term" value="C:membrane-bounded organelle"/>
    <property type="evidence" value="ECO:0000250"/>
    <property type="project" value="UniProtKB"/>
</dbReference>
<dbReference type="GO" id="GO:1990742">
    <property type="term" value="C:microvesicle"/>
    <property type="evidence" value="ECO:0000266"/>
    <property type="project" value="RGD"/>
</dbReference>
<dbReference type="GO" id="GO:0001726">
    <property type="term" value="C:ruffle"/>
    <property type="evidence" value="ECO:0000266"/>
    <property type="project" value="RGD"/>
</dbReference>
<dbReference type="GO" id="GO:0031201">
    <property type="term" value="C:SNARE complex"/>
    <property type="evidence" value="ECO:0000266"/>
    <property type="project" value="RGD"/>
</dbReference>
<dbReference type="GO" id="GO:0001725">
    <property type="term" value="C:stress fiber"/>
    <property type="evidence" value="ECO:0000266"/>
    <property type="project" value="RGD"/>
</dbReference>
<dbReference type="GO" id="GO:0030133">
    <property type="term" value="C:transport vesicle"/>
    <property type="evidence" value="ECO:0000250"/>
    <property type="project" value="UniProtKB"/>
</dbReference>
<dbReference type="GO" id="GO:0051015">
    <property type="term" value="F:actin filament binding"/>
    <property type="evidence" value="ECO:0000250"/>
    <property type="project" value="UniProtKB"/>
</dbReference>
<dbReference type="GO" id="GO:0042802">
    <property type="term" value="F:identical protein binding"/>
    <property type="evidence" value="ECO:0000266"/>
    <property type="project" value="RGD"/>
</dbReference>
<dbReference type="GO" id="GO:0060090">
    <property type="term" value="F:molecular adaptor activity"/>
    <property type="evidence" value="ECO:0000266"/>
    <property type="project" value="RGD"/>
</dbReference>
<dbReference type="GO" id="GO:0042803">
    <property type="term" value="F:protein homodimerization activity"/>
    <property type="evidence" value="ECO:0000250"/>
    <property type="project" value="UniProtKB"/>
</dbReference>
<dbReference type="GO" id="GO:0051017">
    <property type="term" value="P:actin filament bundle assembly"/>
    <property type="evidence" value="ECO:0000266"/>
    <property type="project" value="RGD"/>
</dbReference>
<dbReference type="GO" id="GO:0046085">
    <property type="term" value="P:adenosine metabolic process"/>
    <property type="evidence" value="ECO:0000266"/>
    <property type="project" value="RGD"/>
</dbReference>
<dbReference type="GO" id="GO:0006520">
    <property type="term" value="P:amino acid metabolic process"/>
    <property type="evidence" value="ECO:0000266"/>
    <property type="project" value="RGD"/>
</dbReference>
<dbReference type="GO" id="GO:0008089">
    <property type="term" value="P:anterograde axonal transport"/>
    <property type="evidence" value="ECO:0000250"/>
    <property type="project" value="UniProtKB"/>
</dbReference>
<dbReference type="GO" id="GO:0048490">
    <property type="term" value="P:anterograde synaptic vesicle transport"/>
    <property type="evidence" value="ECO:0000250"/>
    <property type="project" value="UniProtKB"/>
</dbReference>
<dbReference type="GO" id="GO:0046034">
    <property type="term" value="P:ATP metabolic process"/>
    <property type="evidence" value="ECO:0000266"/>
    <property type="project" value="RGD"/>
</dbReference>
<dbReference type="GO" id="GO:0007596">
    <property type="term" value="P:blood coagulation"/>
    <property type="evidence" value="ECO:0000266"/>
    <property type="project" value="RGD"/>
</dbReference>
<dbReference type="GO" id="GO:0002936">
    <property type="term" value="P:bradykinin biosynthetic process"/>
    <property type="evidence" value="ECO:0000266"/>
    <property type="project" value="RGD"/>
</dbReference>
<dbReference type="GO" id="GO:0071364">
    <property type="term" value="P:cellular response to epidermal growth factor stimulus"/>
    <property type="evidence" value="ECO:0000266"/>
    <property type="project" value="RGD"/>
</dbReference>
<dbReference type="GO" id="GO:0060271">
    <property type="term" value="P:cilium assembly"/>
    <property type="evidence" value="ECO:0000266"/>
    <property type="project" value="RGD"/>
</dbReference>
<dbReference type="GO" id="GO:0042745">
    <property type="term" value="P:circadian sleep/wake cycle"/>
    <property type="evidence" value="ECO:0000266"/>
    <property type="project" value="RGD"/>
</dbReference>
<dbReference type="GO" id="GO:0021542">
    <property type="term" value="P:dentate gyrus development"/>
    <property type="evidence" value="ECO:0000266"/>
    <property type="project" value="RGD"/>
</dbReference>
<dbReference type="GO" id="GO:0035646">
    <property type="term" value="P:endosome to melanosome transport"/>
    <property type="evidence" value="ECO:0000250"/>
    <property type="project" value="UniProtKB"/>
</dbReference>
<dbReference type="GO" id="GO:0003158">
    <property type="term" value="P:endothelium development"/>
    <property type="evidence" value="ECO:0000266"/>
    <property type="project" value="RGD"/>
</dbReference>
<dbReference type="GO" id="GO:0010467">
    <property type="term" value="P:gene expression"/>
    <property type="evidence" value="ECO:0000266"/>
    <property type="project" value="RGD"/>
</dbReference>
<dbReference type="GO" id="GO:0006536">
    <property type="term" value="P:glutamate metabolic process"/>
    <property type="evidence" value="ECO:0000266"/>
    <property type="project" value="RGD"/>
</dbReference>
<dbReference type="GO" id="GO:0006541">
    <property type="term" value="P:glutamine metabolic process"/>
    <property type="evidence" value="ECO:0000266"/>
    <property type="project" value="RGD"/>
</dbReference>
<dbReference type="GO" id="GO:0048872">
    <property type="term" value="P:homeostasis of number of cells"/>
    <property type="evidence" value="ECO:0000266"/>
    <property type="project" value="RGD"/>
</dbReference>
<dbReference type="GO" id="GO:0021854">
    <property type="term" value="P:hypothalamus development"/>
    <property type="evidence" value="ECO:0000266"/>
    <property type="project" value="RGD"/>
</dbReference>
<dbReference type="GO" id="GO:0033484">
    <property type="term" value="P:intracellular nitric oxide homeostasis"/>
    <property type="evidence" value="ECO:0000266"/>
    <property type="project" value="RGD"/>
</dbReference>
<dbReference type="GO" id="GO:0046907">
    <property type="term" value="P:intracellular transport"/>
    <property type="evidence" value="ECO:0000318"/>
    <property type="project" value="GO_Central"/>
</dbReference>
<dbReference type="GO" id="GO:0001822">
    <property type="term" value="P:kidney development"/>
    <property type="evidence" value="ECO:0000266"/>
    <property type="project" value="RGD"/>
</dbReference>
<dbReference type="GO" id="GO:0055088">
    <property type="term" value="P:lipid homeostasis"/>
    <property type="evidence" value="ECO:0000266"/>
    <property type="project" value="RGD"/>
</dbReference>
<dbReference type="GO" id="GO:0006629">
    <property type="term" value="P:lipid metabolic process"/>
    <property type="evidence" value="ECO:0000266"/>
    <property type="project" value="RGD"/>
</dbReference>
<dbReference type="GO" id="GO:0048286">
    <property type="term" value="P:lung alveolus development"/>
    <property type="evidence" value="ECO:0000266"/>
    <property type="project" value="RGD"/>
</dbReference>
<dbReference type="GO" id="GO:0030324">
    <property type="term" value="P:lung development"/>
    <property type="evidence" value="ECO:0000266"/>
    <property type="project" value="RGD"/>
</dbReference>
<dbReference type="GO" id="GO:0030318">
    <property type="term" value="P:melanocyte differentiation"/>
    <property type="evidence" value="ECO:0000266"/>
    <property type="project" value="RGD"/>
</dbReference>
<dbReference type="GO" id="GO:0032402">
    <property type="term" value="P:melanosome transport"/>
    <property type="evidence" value="ECO:0000250"/>
    <property type="project" value="UniProtKB"/>
</dbReference>
<dbReference type="GO" id="GO:0061025">
    <property type="term" value="P:membrane fusion"/>
    <property type="evidence" value="ECO:0000266"/>
    <property type="project" value="RGD"/>
</dbReference>
<dbReference type="GO" id="GO:0007613">
    <property type="term" value="P:memory"/>
    <property type="evidence" value="ECO:0000266"/>
    <property type="project" value="RGD"/>
</dbReference>
<dbReference type="GO" id="GO:0035264">
    <property type="term" value="P:multicellular organism growth"/>
    <property type="evidence" value="ECO:0000266"/>
    <property type="project" value="RGD"/>
</dbReference>
<dbReference type="GO" id="GO:0031175">
    <property type="term" value="P:neuron projection development"/>
    <property type="evidence" value="ECO:0000250"/>
    <property type="project" value="UniProtKB"/>
</dbReference>
<dbReference type="GO" id="GO:0006644">
    <property type="term" value="P:phospholipid metabolic process"/>
    <property type="evidence" value="ECO:0000266"/>
    <property type="project" value="RGD"/>
</dbReference>
<dbReference type="GO" id="GO:0043473">
    <property type="term" value="P:pigmentation"/>
    <property type="evidence" value="ECO:0000266"/>
    <property type="project" value="RGD"/>
</dbReference>
<dbReference type="GO" id="GO:0032816">
    <property type="term" value="P:positive regulation of natural killer cell activation"/>
    <property type="evidence" value="ECO:0000266"/>
    <property type="project" value="RGD"/>
</dbReference>
<dbReference type="GO" id="GO:0050942">
    <property type="term" value="P:positive regulation of pigment cell differentiation"/>
    <property type="evidence" value="ECO:0000250"/>
    <property type="project" value="UniProtKB"/>
</dbReference>
<dbReference type="GO" id="GO:0009306">
    <property type="term" value="P:protein secretion"/>
    <property type="evidence" value="ECO:0000266"/>
    <property type="project" value="RGD"/>
</dbReference>
<dbReference type="GO" id="GO:0006605">
    <property type="term" value="P:protein targeting"/>
    <property type="evidence" value="ECO:0000266"/>
    <property type="project" value="RGD"/>
</dbReference>
<dbReference type="GO" id="GO:0071806">
    <property type="term" value="P:protein transmembrane transport"/>
    <property type="evidence" value="ECO:0000266"/>
    <property type="project" value="RGD"/>
</dbReference>
<dbReference type="GO" id="GO:0003016">
    <property type="term" value="P:respiratory system process"/>
    <property type="evidence" value="ECO:0000266"/>
    <property type="project" value="RGD"/>
</dbReference>
<dbReference type="GO" id="GO:1905144">
    <property type="term" value="P:response to acetylcholine"/>
    <property type="evidence" value="ECO:0000266"/>
    <property type="project" value="RGD"/>
</dbReference>
<dbReference type="GO" id="GO:0014823">
    <property type="term" value="P:response to activity"/>
    <property type="evidence" value="ECO:0000266"/>
    <property type="project" value="RGD"/>
</dbReference>
<dbReference type="GO" id="GO:0009410">
    <property type="term" value="P:response to xenobiotic stimulus"/>
    <property type="evidence" value="ECO:0000266"/>
    <property type="project" value="RGD"/>
</dbReference>
<dbReference type="GO" id="GO:0033299">
    <property type="term" value="P:secretion of lysosomal enzymes"/>
    <property type="evidence" value="ECO:0000266"/>
    <property type="project" value="RGD"/>
</dbReference>
<dbReference type="GO" id="GO:0042311">
    <property type="term" value="P:vasodilation"/>
    <property type="evidence" value="ECO:0000266"/>
    <property type="project" value="RGD"/>
</dbReference>
<dbReference type="InterPro" id="IPR017242">
    <property type="entry name" value="BLOC-1_pallidin"/>
</dbReference>
<dbReference type="InterPro" id="IPR028119">
    <property type="entry name" value="Snapin/Pallidin/Snn1"/>
</dbReference>
<dbReference type="PANTHER" id="PTHR31328">
    <property type="entry name" value="BIOGENESIS OF LYSOSOME-RELATED ORGANELLES COMPLEX 1 SUBUNIT 6"/>
    <property type="match status" value="1"/>
</dbReference>
<dbReference type="PANTHER" id="PTHR31328:SF2">
    <property type="entry name" value="BIOGENESIS OF LYSOSOME-RELATED ORGANELLES COMPLEX 1 SUBUNIT 6"/>
    <property type="match status" value="1"/>
</dbReference>
<dbReference type="Pfam" id="PF14712">
    <property type="entry name" value="Snapin_Pallidin"/>
    <property type="match status" value="1"/>
</dbReference>
<dbReference type="PIRSF" id="PIRSF037609">
    <property type="entry name" value="BLOC-1_complex_pallidin"/>
    <property type="match status" value="1"/>
</dbReference>
<reference key="1">
    <citation type="submission" date="2005-07" db="EMBL/GenBank/DDBJ databases">
        <authorList>
            <person name="Mural R.J."/>
            <person name="Adams M.D."/>
            <person name="Myers E.W."/>
            <person name="Smith H.O."/>
            <person name="Venter J.C."/>
        </authorList>
    </citation>
    <scope>NUCLEOTIDE SEQUENCE [LARGE SCALE GENOMIC DNA]</scope>
</reference>
<reference key="2">
    <citation type="journal article" date="2004" name="Genome Res.">
        <title>The status, quality, and expansion of the NIH full-length cDNA project: the Mammalian Gene Collection (MGC).</title>
        <authorList>
            <consortium name="The MGC Project Team"/>
        </authorList>
    </citation>
    <scope>NUCLEOTIDE SEQUENCE [LARGE SCALE MRNA]</scope>
    <source>
        <tissue>Testis</tissue>
    </source>
</reference>
<reference key="3">
    <citation type="journal article" date="2006" name="Mol. Biol. Cell">
        <title>BLOC-1 complex deficiency alters the targeting of adaptor protein complex-3 cargoes.</title>
        <authorList>
            <person name="Salazar G."/>
            <person name="Craige B."/>
            <person name="Styers M.L."/>
            <person name="Newell-Litwa K.A."/>
            <person name="Doucette M.M."/>
            <person name="Wainer B.H."/>
            <person name="Falcon-Perez J.M."/>
            <person name="Dell'Angelica E.C."/>
            <person name="Peden A.A."/>
            <person name="Werner E."/>
            <person name="Faundez V."/>
        </authorList>
    </citation>
    <scope>IDENTIFICATION IN THE BLOC-1 COMPLEX</scope>
    <scope>IDENTIFICATION BY MASS SPECTROMETRY</scope>
</reference>
<evidence type="ECO:0000250" key="1"/>
<evidence type="ECO:0000250" key="2">
    <source>
        <dbReference type="UniProtKB" id="Q9UL45"/>
    </source>
</evidence>
<evidence type="ECO:0000256" key="3">
    <source>
        <dbReference type="SAM" id="MobiDB-lite"/>
    </source>
</evidence>
<evidence type="ECO:0000269" key="4">
    <source>
    </source>
</evidence>
<evidence type="ECO:0000305" key="5"/>
<comment type="function">
    <text evidence="1">Component of the BLOC-1 complex, a complex that is required for normal biogenesis of lysosome-related organelles (LRO), such as platelet dense granules and melanosomes. In concert with the AP-3 complex, the BLOC-1 complex is required to target membrane protein cargos into vesicles assembled at cell bodies for delivery into neurites and nerve terminals. The BLOC-1 complex, in association with SNARE proteins, is also proposed to be involved in neurite extension. May play a role in intracellular vesicle trafficking, particularly in the vesicle-docking and fusion process (By similarity).</text>
</comment>
<comment type="subunit">
    <text evidence="1 4">Homodimer. Octamer composed of one copy each BLOC1S1, BLOC1S2, BLOC1S3, BLOC1S4, BLOC1S5, BLOC1S6, DTNBP1/BLOC1S7 and SNAPIN/BLOC1S8. The BLOC-1 complex associates with the AP-3 protein complex and membrane protein cargos. Interacts with BLOC1S4, BLOC1S5, DTNBP1/BLOC1S7, F-actin, SNAP25 isoform 1 and isoform 2, SNAP47 and STX12 (By similarity). Component of the biogenesis of lysosome-related organelles complex 1 (BLOC-1) composed of BLOC1S1, BLOC1S2, BLOC1S3, BLOC1S4, BLOC1S5, BLOC1S6, DTNBP1/BLOC1S7 and SNAPIN/BLOC1S8.</text>
</comment>
<comment type="subcellular location">
    <subcellularLocation>
        <location evidence="2">Cytoplasm</location>
    </subcellularLocation>
    <subcellularLocation>
        <location evidence="2">Membrane</location>
        <topology evidence="2">Peripheral membrane protein</topology>
    </subcellularLocation>
    <text evidence="2">It can exist as a soluble protein as well as a peripheral membrane protein.</text>
</comment>
<comment type="similarity">
    <text evidence="5">Belongs to the BLOC1S6 family.</text>
</comment>
<proteinExistence type="evidence at protein level"/>
<organism>
    <name type="scientific">Rattus norvegicus</name>
    <name type="common">Rat</name>
    <dbReference type="NCBI Taxonomy" id="10116"/>
    <lineage>
        <taxon>Eukaryota</taxon>
        <taxon>Metazoa</taxon>
        <taxon>Chordata</taxon>
        <taxon>Craniata</taxon>
        <taxon>Vertebrata</taxon>
        <taxon>Euteleostomi</taxon>
        <taxon>Mammalia</taxon>
        <taxon>Eutheria</taxon>
        <taxon>Euarchontoglires</taxon>
        <taxon>Glires</taxon>
        <taxon>Rodentia</taxon>
        <taxon>Myomorpha</taxon>
        <taxon>Muroidea</taxon>
        <taxon>Muridae</taxon>
        <taxon>Murinae</taxon>
        <taxon>Rattus</taxon>
    </lineage>
</organism>
<keyword id="KW-0963">Cytoplasm</keyword>
<keyword id="KW-0472">Membrane</keyword>
<keyword id="KW-1185">Reference proteome</keyword>
<accession>Q4V8A6</accession>
<sequence length="172" mass="19703">MNVPVPPPPDGVLTGPSDSLEAGEPTPGLSDRSPDEGLIEDLALEDRAVEHLVGGLLSHYLPDLQRSKRALQELTQNQVVLLDTLEQEISKFKECHSMLDINALFTEAKHYHAKLVTIRKEMLLLHEKTSKLKKRALKLQQQRQKEELEREQQREREFEREKQLTAKPAKRT</sequence>
<feature type="chain" id="PRO_0000420191" description="Biogenesis of lysosome-related organelles complex 1 subunit 6">
    <location>
        <begin position="1"/>
        <end position="172"/>
    </location>
</feature>
<feature type="region of interest" description="Disordered" evidence="3">
    <location>
        <begin position="1"/>
        <end position="35"/>
    </location>
</feature>
<feature type="region of interest" description="Disordered" evidence="3">
    <location>
        <begin position="136"/>
        <end position="172"/>
    </location>
</feature>
<feature type="compositionally biased region" description="Pro residues" evidence="3">
    <location>
        <begin position="1"/>
        <end position="10"/>
    </location>
</feature>
<feature type="compositionally biased region" description="Basic and acidic residues" evidence="3">
    <location>
        <begin position="143"/>
        <end position="164"/>
    </location>
</feature>
<name>BL1S6_RAT</name>
<protein>
    <recommendedName>
        <fullName>Biogenesis of lysosome-related organelles complex 1 subunit 6</fullName>
        <shortName>BLOC-1 subunit 6</shortName>
    </recommendedName>
    <alternativeName>
        <fullName>Pallid protein homolog</fullName>
    </alternativeName>
    <alternativeName>
        <fullName>Pallidin</fullName>
    </alternativeName>
</protein>